<proteinExistence type="inferred from homology"/>
<accession>A8FLC2</accession>
<protein>
    <recommendedName>
        <fullName evidence="1">Ribosomal RNA small subunit methyltransferase H</fullName>
        <ecNumber evidence="1">2.1.1.199</ecNumber>
    </recommendedName>
    <alternativeName>
        <fullName evidence="1">16S rRNA m(4)C1402 methyltransferase</fullName>
    </alternativeName>
    <alternativeName>
        <fullName evidence="1">rRNA (cytosine-N(4)-)-methyltransferase RsmH</fullName>
    </alternativeName>
</protein>
<reference key="1">
    <citation type="journal article" date="2007" name="J. Bacteriol.">
        <title>The complete genome sequence of Campylobacter jejuni strain 81116 (NCTC11828).</title>
        <authorList>
            <person name="Pearson B.M."/>
            <person name="Gaskin D.J.H."/>
            <person name="Segers R.P.A.M."/>
            <person name="Wells J.M."/>
            <person name="Nuijten P.J.M."/>
            <person name="van Vliet A.H.M."/>
        </authorList>
    </citation>
    <scope>NUCLEOTIDE SEQUENCE [LARGE SCALE GENOMIC DNA]</scope>
    <source>
        <strain>81116 / NCTC 11828</strain>
    </source>
</reference>
<gene>
    <name evidence="1" type="primary">rsmH</name>
    <name type="synonym">mraW</name>
    <name type="ordered locus">C8J_0660</name>
</gene>
<feature type="chain" id="PRO_0000386789" description="Ribosomal RNA small subunit methyltransferase H">
    <location>
        <begin position="1"/>
        <end position="310"/>
    </location>
</feature>
<feature type="binding site" evidence="1">
    <location>
        <begin position="33"/>
        <end position="35"/>
    </location>
    <ligand>
        <name>S-adenosyl-L-methionine</name>
        <dbReference type="ChEBI" id="CHEBI:59789"/>
    </ligand>
</feature>
<feature type="binding site" evidence="1">
    <location>
        <position position="52"/>
    </location>
    <ligand>
        <name>S-adenosyl-L-methionine</name>
        <dbReference type="ChEBI" id="CHEBI:59789"/>
    </ligand>
</feature>
<feature type="binding site" evidence="1">
    <location>
        <position position="79"/>
    </location>
    <ligand>
        <name>S-adenosyl-L-methionine</name>
        <dbReference type="ChEBI" id="CHEBI:59789"/>
    </ligand>
</feature>
<feature type="binding site" evidence="1">
    <location>
        <position position="98"/>
    </location>
    <ligand>
        <name>S-adenosyl-L-methionine</name>
        <dbReference type="ChEBI" id="CHEBI:59789"/>
    </ligand>
</feature>
<feature type="binding site" evidence="1">
    <location>
        <position position="105"/>
    </location>
    <ligand>
        <name>S-adenosyl-L-methionine</name>
        <dbReference type="ChEBI" id="CHEBI:59789"/>
    </ligand>
</feature>
<sequence length="310" mass="35794">MEIPHIPVLLNEVQEIFKNLKTGYFLDCTLGFGGHSEALLKNHPDLKFIACDQDQQALEFSKKRLKDFHNRITFIQSNFSEVLEKISYKEELRGILADIGVSSFQLDNNERGFSVNSDFLDMRMNQNSKISAYEIINTYTKEQLTSIFKDYGELHDAHFIAEKICLERSKNPIKSAKELYQIIGKGKQNHRKISKATLAFQAIRIEVNQELKVLKDFLGHLENLKPKNCILAIISFHSLEDRIVKNFFKKWSKNCICDEKIMRCECGNNHSLGQIITKKAISASKEELLKNSRSSCAKMRAFYFNNLDNK</sequence>
<name>RSMH_CAMJ8</name>
<comment type="function">
    <text evidence="1">Specifically methylates the N4 position of cytidine in position 1402 (C1402) of 16S rRNA.</text>
</comment>
<comment type="catalytic activity">
    <reaction evidence="1">
        <text>cytidine(1402) in 16S rRNA + S-adenosyl-L-methionine = N(4)-methylcytidine(1402) in 16S rRNA + S-adenosyl-L-homocysteine + H(+)</text>
        <dbReference type="Rhea" id="RHEA:42928"/>
        <dbReference type="Rhea" id="RHEA-COMP:10286"/>
        <dbReference type="Rhea" id="RHEA-COMP:10287"/>
        <dbReference type="ChEBI" id="CHEBI:15378"/>
        <dbReference type="ChEBI" id="CHEBI:57856"/>
        <dbReference type="ChEBI" id="CHEBI:59789"/>
        <dbReference type="ChEBI" id="CHEBI:74506"/>
        <dbReference type="ChEBI" id="CHEBI:82748"/>
        <dbReference type="EC" id="2.1.1.199"/>
    </reaction>
</comment>
<comment type="subcellular location">
    <subcellularLocation>
        <location evidence="1">Cytoplasm</location>
    </subcellularLocation>
</comment>
<comment type="similarity">
    <text evidence="1">Belongs to the methyltransferase superfamily. RsmH family.</text>
</comment>
<organism>
    <name type="scientific">Campylobacter jejuni subsp. jejuni serotype O:6 (strain 81116 / NCTC 11828)</name>
    <dbReference type="NCBI Taxonomy" id="407148"/>
    <lineage>
        <taxon>Bacteria</taxon>
        <taxon>Pseudomonadati</taxon>
        <taxon>Campylobacterota</taxon>
        <taxon>Epsilonproteobacteria</taxon>
        <taxon>Campylobacterales</taxon>
        <taxon>Campylobacteraceae</taxon>
        <taxon>Campylobacter</taxon>
    </lineage>
</organism>
<evidence type="ECO:0000255" key="1">
    <source>
        <dbReference type="HAMAP-Rule" id="MF_01007"/>
    </source>
</evidence>
<keyword id="KW-0963">Cytoplasm</keyword>
<keyword id="KW-0489">Methyltransferase</keyword>
<keyword id="KW-0698">rRNA processing</keyword>
<keyword id="KW-0949">S-adenosyl-L-methionine</keyword>
<keyword id="KW-0808">Transferase</keyword>
<dbReference type="EC" id="2.1.1.199" evidence="1"/>
<dbReference type="EMBL" id="CP000814">
    <property type="protein sequence ID" value="ABV52259.1"/>
    <property type="molecule type" value="Genomic_DNA"/>
</dbReference>
<dbReference type="SMR" id="A8FLC2"/>
<dbReference type="KEGG" id="cju:C8J_0660"/>
<dbReference type="HOGENOM" id="CLU_038422_3_0_7"/>
<dbReference type="GO" id="GO:0005737">
    <property type="term" value="C:cytoplasm"/>
    <property type="evidence" value="ECO:0007669"/>
    <property type="project" value="UniProtKB-SubCell"/>
</dbReference>
<dbReference type="GO" id="GO:0071424">
    <property type="term" value="F:rRNA (cytosine-N4-)-methyltransferase activity"/>
    <property type="evidence" value="ECO:0007669"/>
    <property type="project" value="UniProtKB-UniRule"/>
</dbReference>
<dbReference type="GO" id="GO:0070475">
    <property type="term" value="P:rRNA base methylation"/>
    <property type="evidence" value="ECO:0007669"/>
    <property type="project" value="UniProtKB-UniRule"/>
</dbReference>
<dbReference type="Gene3D" id="1.10.150.170">
    <property type="entry name" value="Putative methyltransferase TM0872, insert domain"/>
    <property type="match status" value="1"/>
</dbReference>
<dbReference type="Gene3D" id="3.40.50.150">
    <property type="entry name" value="Vaccinia Virus protein VP39"/>
    <property type="match status" value="1"/>
</dbReference>
<dbReference type="HAMAP" id="MF_01007">
    <property type="entry name" value="16SrRNA_methyltr_H"/>
    <property type="match status" value="1"/>
</dbReference>
<dbReference type="InterPro" id="IPR002903">
    <property type="entry name" value="RsmH"/>
</dbReference>
<dbReference type="InterPro" id="IPR023397">
    <property type="entry name" value="SAM-dep_MeTrfase_MraW_recog"/>
</dbReference>
<dbReference type="InterPro" id="IPR029063">
    <property type="entry name" value="SAM-dependent_MTases_sf"/>
</dbReference>
<dbReference type="NCBIfam" id="TIGR00006">
    <property type="entry name" value="16S rRNA (cytosine(1402)-N(4))-methyltransferase RsmH"/>
    <property type="match status" value="1"/>
</dbReference>
<dbReference type="PANTHER" id="PTHR11265:SF0">
    <property type="entry name" value="12S RRNA N4-METHYLCYTIDINE METHYLTRANSFERASE"/>
    <property type="match status" value="1"/>
</dbReference>
<dbReference type="PANTHER" id="PTHR11265">
    <property type="entry name" value="S-ADENOSYL-METHYLTRANSFERASE MRAW"/>
    <property type="match status" value="1"/>
</dbReference>
<dbReference type="Pfam" id="PF01795">
    <property type="entry name" value="Methyltransf_5"/>
    <property type="match status" value="1"/>
</dbReference>
<dbReference type="PIRSF" id="PIRSF004486">
    <property type="entry name" value="MraW"/>
    <property type="match status" value="1"/>
</dbReference>
<dbReference type="SUPFAM" id="SSF81799">
    <property type="entry name" value="Putative methyltransferase TM0872, insert domain"/>
    <property type="match status" value="1"/>
</dbReference>
<dbReference type="SUPFAM" id="SSF53335">
    <property type="entry name" value="S-adenosyl-L-methionine-dependent methyltransferases"/>
    <property type="match status" value="1"/>
</dbReference>